<proteinExistence type="inferred from homology"/>
<organism>
    <name type="scientific">Rhodococcus jostii (strain RHA1)</name>
    <dbReference type="NCBI Taxonomy" id="101510"/>
    <lineage>
        <taxon>Bacteria</taxon>
        <taxon>Bacillati</taxon>
        <taxon>Actinomycetota</taxon>
        <taxon>Actinomycetes</taxon>
        <taxon>Mycobacteriales</taxon>
        <taxon>Nocardiaceae</taxon>
        <taxon>Rhodococcus</taxon>
    </lineage>
</organism>
<keyword id="KW-0131">Cell cycle</keyword>
<keyword id="KW-0132">Cell division</keyword>
<keyword id="KW-0143">Chaperone</keyword>
<keyword id="KW-0963">Cytoplasm</keyword>
<keyword id="KW-0413">Isomerase</keyword>
<keyword id="KW-0697">Rotamase</keyword>
<dbReference type="EC" id="5.2.1.8" evidence="1"/>
<dbReference type="EMBL" id="CP000431">
    <property type="protein sequence ID" value="ABG93197.1"/>
    <property type="molecule type" value="Genomic_DNA"/>
</dbReference>
<dbReference type="RefSeq" id="WP_011594412.1">
    <property type="nucleotide sequence ID" value="NC_008268.1"/>
</dbReference>
<dbReference type="SMR" id="Q0SGY9"/>
<dbReference type="KEGG" id="rha:RHA1_ro01373"/>
<dbReference type="PATRIC" id="fig|101510.16.peg.1400"/>
<dbReference type="eggNOG" id="COG0544">
    <property type="taxonomic scope" value="Bacteria"/>
</dbReference>
<dbReference type="HOGENOM" id="CLU_033058_3_0_11"/>
<dbReference type="OrthoDB" id="9767721at2"/>
<dbReference type="Proteomes" id="UP000008710">
    <property type="component" value="Chromosome"/>
</dbReference>
<dbReference type="GO" id="GO:0005737">
    <property type="term" value="C:cytoplasm"/>
    <property type="evidence" value="ECO:0007669"/>
    <property type="project" value="UniProtKB-SubCell"/>
</dbReference>
<dbReference type="GO" id="GO:0003755">
    <property type="term" value="F:peptidyl-prolyl cis-trans isomerase activity"/>
    <property type="evidence" value="ECO:0007669"/>
    <property type="project" value="UniProtKB-UniRule"/>
</dbReference>
<dbReference type="GO" id="GO:0044183">
    <property type="term" value="F:protein folding chaperone"/>
    <property type="evidence" value="ECO:0007669"/>
    <property type="project" value="TreeGrafter"/>
</dbReference>
<dbReference type="GO" id="GO:0043022">
    <property type="term" value="F:ribosome binding"/>
    <property type="evidence" value="ECO:0007669"/>
    <property type="project" value="TreeGrafter"/>
</dbReference>
<dbReference type="GO" id="GO:0051083">
    <property type="term" value="P:'de novo' cotranslational protein folding"/>
    <property type="evidence" value="ECO:0007669"/>
    <property type="project" value="TreeGrafter"/>
</dbReference>
<dbReference type="GO" id="GO:0051301">
    <property type="term" value="P:cell division"/>
    <property type="evidence" value="ECO:0007669"/>
    <property type="project" value="UniProtKB-KW"/>
</dbReference>
<dbReference type="GO" id="GO:0061077">
    <property type="term" value="P:chaperone-mediated protein folding"/>
    <property type="evidence" value="ECO:0007669"/>
    <property type="project" value="TreeGrafter"/>
</dbReference>
<dbReference type="GO" id="GO:0015031">
    <property type="term" value="P:protein transport"/>
    <property type="evidence" value="ECO:0007669"/>
    <property type="project" value="UniProtKB-UniRule"/>
</dbReference>
<dbReference type="GO" id="GO:0043335">
    <property type="term" value="P:protein unfolding"/>
    <property type="evidence" value="ECO:0007669"/>
    <property type="project" value="TreeGrafter"/>
</dbReference>
<dbReference type="FunFam" id="3.10.50.40:FF:000019">
    <property type="entry name" value="Trigger factor"/>
    <property type="match status" value="1"/>
</dbReference>
<dbReference type="Gene3D" id="3.10.50.40">
    <property type="match status" value="1"/>
</dbReference>
<dbReference type="Gene3D" id="3.30.70.1050">
    <property type="entry name" value="Trigger factor ribosome-binding domain"/>
    <property type="match status" value="1"/>
</dbReference>
<dbReference type="Gene3D" id="1.10.3120.10">
    <property type="entry name" value="Trigger factor, C-terminal domain"/>
    <property type="match status" value="1"/>
</dbReference>
<dbReference type="HAMAP" id="MF_00303">
    <property type="entry name" value="Trigger_factor_Tig"/>
    <property type="match status" value="1"/>
</dbReference>
<dbReference type="InterPro" id="IPR046357">
    <property type="entry name" value="PPIase_dom_sf"/>
</dbReference>
<dbReference type="InterPro" id="IPR001179">
    <property type="entry name" value="PPIase_FKBP_dom"/>
</dbReference>
<dbReference type="InterPro" id="IPR005215">
    <property type="entry name" value="Trig_fac"/>
</dbReference>
<dbReference type="InterPro" id="IPR008880">
    <property type="entry name" value="Trigger_fac_C"/>
</dbReference>
<dbReference type="InterPro" id="IPR037041">
    <property type="entry name" value="Trigger_fac_C_sf"/>
</dbReference>
<dbReference type="InterPro" id="IPR008881">
    <property type="entry name" value="Trigger_fac_ribosome-bd_bac"/>
</dbReference>
<dbReference type="InterPro" id="IPR036611">
    <property type="entry name" value="Trigger_fac_ribosome-bd_sf"/>
</dbReference>
<dbReference type="InterPro" id="IPR027304">
    <property type="entry name" value="Trigger_fact/SurA_dom_sf"/>
</dbReference>
<dbReference type="NCBIfam" id="TIGR00115">
    <property type="entry name" value="tig"/>
    <property type="match status" value="1"/>
</dbReference>
<dbReference type="PANTHER" id="PTHR30560">
    <property type="entry name" value="TRIGGER FACTOR CHAPERONE AND PEPTIDYL-PROLYL CIS/TRANS ISOMERASE"/>
    <property type="match status" value="1"/>
</dbReference>
<dbReference type="PANTHER" id="PTHR30560:SF3">
    <property type="entry name" value="TRIGGER FACTOR-LIKE PROTEIN TIG, CHLOROPLASTIC"/>
    <property type="match status" value="1"/>
</dbReference>
<dbReference type="Pfam" id="PF00254">
    <property type="entry name" value="FKBP_C"/>
    <property type="match status" value="1"/>
</dbReference>
<dbReference type="Pfam" id="PF05698">
    <property type="entry name" value="Trigger_C"/>
    <property type="match status" value="1"/>
</dbReference>
<dbReference type="Pfam" id="PF05697">
    <property type="entry name" value="Trigger_N"/>
    <property type="match status" value="1"/>
</dbReference>
<dbReference type="PIRSF" id="PIRSF003095">
    <property type="entry name" value="Trigger_factor"/>
    <property type="match status" value="1"/>
</dbReference>
<dbReference type="SUPFAM" id="SSF54534">
    <property type="entry name" value="FKBP-like"/>
    <property type="match status" value="1"/>
</dbReference>
<dbReference type="SUPFAM" id="SSF109998">
    <property type="entry name" value="Triger factor/SurA peptide-binding domain-like"/>
    <property type="match status" value="1"/>
</dbReference>
<dbReference type="SUPFAM" id="SSF102735">
    <property type="entry name" value="Trigger factor ribosome-binding domain"/>
    <property type="match status" value="1"/>
</dbReference>
<dbReference type="PROSITE" id="PS50059">
    <property type="entry name" value="FKBP_PPIASE"/>
    <property type="match status" value="1"/>
</dbReference>
<comment type="function">
    <text evidence="1">Involved in protein export. Acts as a chaperone by maintaining the newly synthesized protein in an open conformation. Functions as a peptidyl-prolyl cis-trans isomerase.</text>
</comment>
<comment type="catalytic activity">
    <reaction evidence="1">
        <text>[protein]-peptidylproline (omega=180) = [protein]-peptidylproline (omega=0)</text>
        <dbReference type="Rhea" id="RHEA:16237"/>
        <dbReference type="Rhea" id="RHEA-COMP:10747"/>
        <dbReference type="Rhea" id="RHEA-COMP:10748"/>
        <dbReference type="ChEBI" id="CHEBI:83833"/>
        <dbReference type="ChEBI" id="CHEBI:83834"/>
        <dbReference type="EC" id="5.2.1.8"/>
    </reaction>
</comment>
<comment type="subcellular location">
    <subcellularLocation>
        <location>Cytoplasm</location>
    </subcellularLocation>
    <text evidence="1">About half TF is bound to the ribosome near the polypeptide exit tunnel while the other half is free in the cytoplasm.</text>
</comment>
<comment type="domain">
    <text evidence="1">Consists of 3 domains; the N-terminus binds the ribosome, the middle domain has PPIase activity, while the C-terminus has intrinsic chaperone activity on its own.</text>
</comment>
<comment type="similarity">
    <text evidence="1">Belongs to the FKBP-type PPIase family. Tig subfamily.</text>
</comment>
<accession>Q0SGY9</accession>
<sequence length="464" mass="50020">MKSTVEQLSPTRVRINVEVPFEELKPDFDKAYKALAQQIRLPGFRPGKAPAKLLEARVGRGAVLEQVVNDALPSRYSEAVTSASVKAIGQPEIEITKIEDGELLEFTAEVDVRPEITLPDYSELSVTVDPIEITDEAVEEQLLSLRQRFGTLTGVERAVEDGDFISIDLSATVDGEAVPEATASGLSHEVGSGQLIEGLDEAVVGVKAGESKEFTSTLVAGDHAGKEAVVTVTVGTVKERELPAEDDEFAQLASEFDTLDELKADLRERVARVRKVEQAGQIRDKVLETLLETVEVPLPEAVVKAEVDAALHDAVHGLDHDEEALNKLLEEQGTSREEFDKDAKESAERSVKTQLLLDAIADASDVTVGQDELTERILFQAQRYGMAPEQFIQQIQQAGQLGAVFADVRRGKALAGVVEQATVTDTSGAAVDTAELFGNGEAETEEAASTDEAASDSTESEDQK</sequence>
<name>TIG_RHOJR</name>
<protein>
    <recommendedName>
        <fullName evidence="1">Trigger factor</fullName>
        <shortName evidence="1">TF</shortName>
        <ecNumber evidence="1">5.2.1.8</ecNumber>
    </recommendedName>
    <alternativeName>
        <fullName evidence="1">PPIase</fullName>
    </alternativeName>
</protein>
<gene>
    <name evidence="1" type="primary">tig</name>
    <name type="ordered locus">RHA1_ro01373</name>
</gene>
<reference key="1">
    <citation type="journal article" date="2006" name="Proc. Natl. Acad. Sci. U.S.A.">
        <title>The complete genome of Rhodococcus sp. RHA1 provides insights into a catabolic powerhouse.</title>
        <authorList>
            <person name="McLeod M.P."/>
            <person name="Warren R.L."/>
            <person name="Hsiao W.W.L."/>
            <person name="Araki N."/>
            <person name="Myhre M."/>
            <person name="Fernandes C."/>
            <person name="Miyazawa D."/>
            <person name="Wong W."/>
            <person name="Lillquist A.L."/>
            <person name="Wang D."/>
            <person name="Dosanjh M."/>
            <person name="Hara H."/>
            <person name="Petrescu A."/>
            <person name="Morin R.D."/>
            <person name="Yang G."/>
            <person name="Stott J.M."/>
            <person name="Schein J.E."/>
            <person name="Shin H."/>
            <person name="Smailus D."/>
            <person name="Siddiqui A.S."/>
            <person name="Marra M.A."/>
            <person name="Jones S.J.M."/>
            <person name="Holt R."/>
            <person name="Brinkman F.S.L."/>
            <person name="Miyauchi K."/>
            <person name="Fukuda M."/>
            <person name="Davies J.E."/>
            <person name="Mohn W.W."/>
            <person name="Eltis L.D."/>
        </authorList>
    </citation>
    <scope>NUCLEOTIDE SEQUENCE [LARGE SCALE GENOMIC DNA]</scope>
    <source>
        <strain>RHA1</strain>
    </source>
</reference>
<evidence type="ECO:0000255" key="1">
    <source>
        <dbReference type="HAMAP-Rule" id="MF_00303"/>
    </source>
</evidence>
<evidence type="ECO:0000256" key="2">
    <source>
        <dbReference type="SAM" id="MobiDB-lite"/>
    </source>
</evidence>
<feature type="chain" id="PRO_0000256603" description="Trigger factor">
    <location>
        <begin position="1"/>
        <end position="464"/>
    </location>
</feature>
<feature type="domain" description="PPIase FKBP-type" evidence="1">
    <location>
        <begin position="162"/>
        <end position="243"/>
    </location>
</feature>
<feature type="region of interest" description="Disordered" evidence="2">
    <location>
        <begin position="435"/>
        <end position="464"/>
    </location>
</feature>